<dbReference type="EMBL" id="AY707479">
    <property type="protein sequence ID" value="AAU11289.1"/>
    <property type="molecule type" value="Genomic_DNA"/>
</dbReference>
<dbReference type="EMBL" id="AY707476">
    <property type="protein sequence ID" value="AAU11289.1"/>
    <property type="status" value="JOINED"/>
    <property type="molecule type" value="Genomic_DNA"/>
</dbReference>
<dbReference type="EMBL" id="AY707477">
    <property type="protein sequence ID" value="AAU11289.1"/>
    <property type="status" value="JOINED"/>
    <property type="molecule type" value="Genomic_DNA"/>
</dbReference>
<dbReference type="EMBL" id="AY707478">
    <property type="protein sequence ID" value="AAU11289.1"/>
    <property type="status" value="JOINED"/>
    <property type="molecule type" value="Genomic_DNA"/>
</dbReference>
<dbReference type="SMR" id="Q66S65"/>
<dbReference type="GO" id="GO:0005581">
    <property type="term" value="C:collagen trimer"/>
    <property type="evidence" value="ECO:0007669"/>
    <property type="project" value="UniProtKB-KW"/>
</dbReference>
<dbReference type="GO" id="GO:0005615">
    <property type="term" value="C:extracellular space"/>
    <property type="evidence" value="ECO:0007669"/>
    <property type="project" value="TreeGrafter"/>
</dbReference>
<dbReference type="GO" id="GO:0005771">
    <property type="term" value="C:multivesicular body"/>
    <property type="evidence" value="ECO:0007669"/>
    <property type="project" value="TreeGrafter"/>
</dbReference>
<dbReference type="GO" id="GO:0005537">
    <property type="term" value="F:D-mannose binding"/>
    <property type="evidence" value="ECO:0007669"/>
    <property type="project" value="UniProtKB-KW"/>
</dbReference>
<dbReference type="GO" id="GO:0006958">
    <property type="term" value="P:complement activation, classical pathway"/>
    <property type="evidence" value="ECO:0007669"/>
    <property type="project" value="UniProtKB-KW"/>
</dbReference>
<dbReference type="GO" id="GO:0001867">
    <property type="term" value="P:complement activation, lectin pathway"/>
    <property type="evidence" value="ECO:0007669"/>
    <property type="project" value="UniProtKB-KW"/>
</dbReference>
<dbReference type="CDD" id="cd03591">
    <property type="entry name" value="CLECT_collectin_like"/>
    <property type="match status" value="1"/>
</dbReference>
<dbReference type="FunFam" id="3.10.100.10:FF:000088">
    <property type="entry name" value="Mannose-binding protein A"/>
    <property type="match status" value="1"/>
</dbReference>
<dbReference type="Gene3D" id="3.10.100.10">
    <property type="entry name" value="Mannose-Binding Protein A, subunit A"/>
    <property type="match status" value="1"/>
</dbReference>
<dbReference type="InterPro" id="IPR001304">
    <property type="entry name" value="C-type_lectin-like"/>
</dbReference>
<dbReference type="InterPro" id="IPR016186">
    <property type="entry name" value="C-type_lectin-like/link_sf"/>
</dbReference>
<dbReference type="InterPro" id="IPR018378">
    <property type="entry name" value="C-type_lectin_CS"/>
</dbReference>
<dbReference type="InterPro" id="IPR051077">
    <property type="entry name" value="Ca-dependent_lectin"/>
</dbReference>
<dbReference type="InterPro" id="IPR008160">
    <property type="entry name" value="Collagen"/>
</dbReference>
<dbReference type="InterPro" id="IPR033990">
    <property type="entry name" value="Collectin_CTLD"/>
</dbReference>
<dbReference type="InterPro" id="IPR016187">
    <property type="entry name" value="CTDL_fold"/>
</dbReference>
<dbReference type="PANTHER" id="PTHR24024:SF34">
    <property type="entry name" value="MANNOSE-BINDING PROTEIN C"/>
    <property type="match status" value="1"/>
</dbReference>
<dbReference type="PANTHER" id="PTHR24024">
    <property type="entry name" value="PULMONARY SURFACTANT-ASSOCIATED PROTEIN A"/>
    <property type="match status" value="1"/>
</dbReference>
<dbReference type="Pfam" id="PF01391">
    <property type="entry name" value="Collagen"/>
    <property type="match status" value="1"/>
</dbReference>
<dbReference type="Pfam" id="PF00059">
    <property type="entry name" value="Lectin_C"/>
    <property type="match status" value="1"/>
</dbReference>
<dbReference type="SMART" id="SM00034">
    <property type="entry name" value="CLECT"/>
    <property type="match status" value="1"/>
</dbReference>
<dbReference type="SUPFAM" id="SSF56436">
    <property type="entry name" value="C-type lectin-like"/>
    <property type="match status" value="1"/>
</dbReference>
<dbReference type="SUPFAM" id="SSF57944">
    <property type="entry name" value="Triple coiled coil domain of C-type lectins"/>
    <property type="match status" value="1"/>
</dbReference>
<dbReference type="PROSITE" id="PS00615">
    <property type="entry name" value="C_TYPE_LECTIN_1"/>
    <property type="match status" value="1"/>
</dbReference>
<dbReference type="PROSITE" id="PS50041">
    <property type="entry name" value="C_TYPE_LECTIN_2"/>
    <property type="match status" value="1"/>
</dbReference>
<feature type="signal peptide" evidence="1">
    <location>
        <begin position="1"/>
        <end position="20"/>
    </location>
</feature>
<feature type="chain" id="PRO_0000017407" description="Mannose-binding protein C">
    <location>
        <begin position="21"/>
        <end position="248"/>
    </location>
</feature>
<feature type="domain" description="Collagen-like">
    <location>
        <begin position="42"/>
        <end position="99"/>
    </location>
</feature>
<feature type="domain" description="C-type lectin" evidence="2">
    <location>
        <begin position="134"/>
        <end position="245"/>
    </location>
</feature>
<feature type="region of interest" description="Disordered" evidence="3">
    <location>
        <begin position="43"/>
        <end position="111"/>
    </location>
</feature>
<feature type="coiled-coil region" evidence="1">
    <location>
        <begin position="112"/>
        <end position="130"/>
    </location>
</feature>
<feature type="compositionally biased region" description="Basic and acidic residues" evidence="3">
    <location>
        <begin position="49"/>
        <end position="61"/>
    </location>
</feature>
<feature type="compositionally biased region" description="Low complexity" evidence="3">
    <location>
        <begin position="82"/>
        <end position="91"/>
    </location>
</feature>
<feature type="modified residue" description="4-hydroxyproline" evidence="1">
    <location>
        <position position="47"/>
    </location>
</feature>
<feature type="modified residue" description="4-hydroxyproline" evidence="1">
    <location>
        <position position="73"/>
    </location>
</feature>
<feature type="modified residue" description="4-hydroxyproline" evidence="1">
    <location>
        <position position="79"/>
    </location>
</feature>
<feature type="modified residue" description="4-hydroxyproline" evidence="1">
    <location>
        <position position="82"/>
    </location>
</feature>
<feature type="modified residue" description="4-hydroxyproline" evidence="1">
    <location>
        <position position="88"/>
    </location>
</feature>
<feature type="disulfide bond" evidence="2">
    <location>
        <begin position="155"/>
        <end position="244"/>
    </location>
</feature>
<feature type="disulfide bond" evidence="2">
    <location>
        <begin position="222"/>
        <end position="236"/>
    </location>
</feature>
<organism>
    <name type="scientific">Papio papio</name>
    <name type="common">Guinea baboon</name>
    <name type="synonym">Cynocephalus papio</name>
    <dbReference type="NCBI Taxonomy" id="100937"/>
    <lineage>
        <taxon>Eukaryota</taxon>
        <taxon>Metazoa</taxon>
        <taxon>Chordata</taxon>
        <taxon>Craniata</taxon>
        <taxon>Vertebrata</taxon>
        <taxon>Euteleostomi</taxon>
        <taxon>Mammalia</taxon>
        <taxon>Eutheria</taxon>
        <taxon>Euarchontoglires</taxon>
        <taxon>Primates</taxon>
        <taxon>Haplorrhini</taxon>
        <taxon>Catarrhini</taxon>
        <taxon>Cercopithecidae</taxon>
        <taxon>Cercopithecinae</taxon>
        <taxon>Papio</taxon>
    </lineage>
</organism>
<evidence type="ECO:0000250" key="1"/>
<evidence type="ECO:0000255" key="2">
    <source>
        <dbReference type="PROSITE-ProRule" id="PRU00040"/>
    </source>
</evidence>
<evidence type="ECO:0000256" key="3">
    <source>
        <dbReference type="SAM" id="MobiDB-lite"/>
    </source>
</evidence>
<accession>Q66S65</accession>
<name>MBL2_PAPPA</name>
<keyword id="KW-0106">Calcium</keyword>
<keyword id="KW-0175">Coiled coil</keyword>
<keyword id="KW-0176">Collagen</keyword>
<keyword id="KW-1018">Complement activation lectin pathway</keyword>
<keyword id="KW-0180">Complement pathway</keyword>
<keyword id="KW-1015">Disulfide bond</keyword>
<keyword id="KW-0379">Hydroxylation</keyword>
<keyword id="KW-0391">Immunity</keyword>
<keyword id="KW-0399">Innate immunity</keyword>
<keyword id="KW-0430">Lectin</keyword>
<keyword id="KW-0465">Mannose-binding</keyword>
<keyword id="KW-0677">Repeat</keyword>
<keyword id="KW-0964">Secreted</keyword>
<keyword id="KW-0732">Signal</keyword>
<gene>
    <name type="primary">MBL2</name>
</gene>
<comment type="function">
    <text evidence="1">Calcium-dependent lectin involved in innate immune defense. Binds mannose, fucose and N-acetylglucosamine on different microorganisms and activates the lectin complement pathway. Binds to late apoptotic cells, as well as to apoptotic blebs and to necrotic cells, but not to early apoptotic cells, facilitating their uptake by macrophages (By similarity).</text>
</comment>
<comment type="subunit">
    <text evidence="1">Oligomeric complex of 3 or more homotrimers. Interacts with MASP1 and MASP2 (By similarity). Interacts with MEP1A and MEP1B and may inhibit their catalytic activity (By similarity).</text>
</comment>
<comment type="subcellular location">
    <subcellularLocation>
        <location evidence="1">Secreted</location>
    </subcellularLocation>
</comment>
<comment type="domain">
    <text evidence="1">The coiled-coil domain mediates trimerization.</text>
</comment>
<comment type="PTM">
    <text evidence="1">Hydroxylation on proline residues within the sequence motif, GXPG, is most likely to be 4-hydroxy as this fits the requirement for 4-hydroxylation in vertebrates.</text>
</comment>
<reference key="1">
    <citation type="journal article" date="2004" name="Genes Immun.">
        <title>Evolution of the mannose-binding lectin gene in primates.</title>
        <authorList>
            <person name="Verga Falzacappa M.V."/>
            <person name="Segat L."/>
            <person name="Puppini B."/>
            <person name="Amoroso A."/>
            <person name="Crovella S."/>
        </authorList>
    </citation>
    <scope>NUCLEOTIDE SEQUENCE [GENOMIC DNA]</scope>
</reference>
<protein>
    <recommendedName>
        <fullName>Mannose-binding protein C</fullName>
        <shortName>MBP-C</shortName>
    </recommendedName>
    <alternativeName>
        <fullName>MBP1</fullName>
    </alternativeName>
    <alternativeName>
        <fullName>Mannan-binding protein</fullName>
    </alternativeName>
    <alternativeName>
        <fullName>Mannose-binding lectin</fullName>
    </alternativeName>
</protein>
<proteinExistence type="inferred from homology"/>
<sequence length="248" mass="26314">MSLFPSLTLLLLSVVATSYSETVTCEDSQKICPAVIACNSPGINGFPGKDGRDGTKGEKGEPGQGLRGLQGPPGKLGPPGNPGSSGSPGPKGQKGDPGESPDCESSLAASERKALQTEMARIKKWLTFSLGRQVGNKFFLTNGEMMTFDKVKALCAEFQASVATPRNAAENRAIQNLIKEEAFLGITDENTEGEFVDLTGNKLTYTNWNDGEPNNAGSNEDCVLLLKNGKWNDIPCSSSHLALCEFPI</sequence>